<dbReference type="EMBL" id="AJ608774">
    <property type="protein sequence ID" value="CAE75586.1"/>
    <property type="molecule type" value="mRNA"/>
</dbReference>
<dbReference type="EMBL" id="AJ608775">
    <property type="protein sequence ID" value="CAE75587.1"/>
    <property type="molecule type" value="mRNA"/>
</dbReference>
<dbReference type="EMBL" id="BX784395">
    <property type="protein sequence ID" value="CAI19412.1"/>
    <property type="molecule type" value="Genomic_DNA"/>
</dbReference>
<dbReference type="EMBL" id="AL031276">
    <property type="protein sequence ID" value="CAI19412.1"/>
    <property type="status" value="JOINED"/>
    <property type="molecule type" value="Genomic_DNA"/>
</dbReference>
<dbReference type="EMBL" id="AL031296">
    <property type="protein sequence ID" value="CAI19412.1"/>
    <property type="status" value="JOINED"/>
    <property type="molecule type" value="Genomic_DNA"/>
</dbReference>
<dbReference type="EMBL" id="AL109757">
    <property type="protein sequence ID" value="CAI19412.1"/>
    <property type="status" value="JOINED"/>
    <property type="molecule type" value="Genomic_DNA"/>
</dbReference>
<dbReference type="EMBL" id="BX682532">
    <property type="protein sequence ID" value="CAI19412.1"/>
    <property type="status" value="JOINED"/>
    <property type="molecule type" value="Genomic_DNA"/>
</dbReference>
<dbReference type="EMBL" id="BX784396">
    <property type="protein sequence ID" value="CAI19412.1"/>
    <property type="status" value="JOINED"/>
    <property type="molecule type" value="Genomic_DNA"/>
</dbReference>
<dbReference type="EMBL" id="BX784396">
    <property type="protein sequence ID" value="CAI19414.1"/>
    <property type="molecule type" value="Genomic_DNA"/>
</dbReference>
<dbReference type="EMBL" id="AL031276">
    <property type="protein sequence ID" value="CAI19414.1"/>
    <property type="status" value="JOINED"/>
    <property type="molecule type" value="Genomic_DNA"/>
</dbReference>
<dbReference type="EMBL" id="AL031296">
    <property type="protein sequence ID" value="CAI19414.1"/>
    <property type="status" value="JOINED"/>
    <property type="molecule type" value="Genomic_DNA"/>
</dbReference>
<dbReference type="EMBL" id="AL109757">
    <property type="protein sequence ID" value="CAI19414.1"/>
    <property type="status" value="JOINED"/>
    <property type="molecule type" value="Genomic_DNA"/>
</dbReference>
<dbReference type="EMBL" id="BX682532">
    <property type="protein sequence ID" value="CAI19414.1"/>
    <property type="status" value="JOINED"/>
    <property type="molecule type" value="Genomic_DNA"/>
</dbReference>
<dbReference type="EMBL" id="BX784395">
    <property type="protein sequence ID" value="CAI19414.1"/>
    <property type="status" value="JOINED"/>
    <property type="molecule type" value="Genomic_DNA"/>
</dbReference>
<dbReference type="EMBL" id="AL162331">
    <property type="protein sequence ID" value="CAB82724.1"/>
    <property type="molecule type" value="mRNA"/>
</dbReference>
<dbReference type="EMBL" id="AB007922">
    <property type="protein sequence ID" value="BAA32298.3"/>
    <property type="molecule type" value="mRNA"/>
</dbReference>
<dbReference type="EMBL" id="AK125118">
    <property type="protein sequence ID" value="BAC86054.1"/>
    <property type="status" value="ALT_SEQ"/>
    <property type="molecule type" value="mRNA"/>
</dbReference>
<dbReference type="EMBL" id="BX641035">
    <property type="protein sequence ID" value="CAE46021.1"/>
    <property type="status" value="ALT_FRAME"/>
    <property type="molecule type" value="mRNA"/>
</dbReference>
<dbReference type="EMBL" id="BC028115">
    <property type="protein sequence ID" value="AAH28115.1"/>
    <property type="molecule type" value="mRNA"/>
</dbReference>
<dbReference type="EMBL" id="BC051804">
    <property type="protein sequence ID" value="AAH51804.1"/>
    <property type="molecule type" value="mRNA"/>
</dbReference>
<dbReference type="CCDS" id="CCDS30588.1">
    <molecule id="Q5THJ4-1"/>
</dbReference>
<dbReference type="CCDS" id="CCDS30589.1">
    <molecule id="Q5THJ4-2"/>
</dbReference>
<dbReference type="PIR" id="T00067">
    <property type="entry name" value="T00067"/>
</dbReference>
<dbReference type="RefSeq" id="NP_056193.2">
    <molecule id="Q5THJ4-1"/>
    <property type="nucleotide sequence ID" value="NM_015378.4"/>
</dbReference>
<dbReference type="RefSeq" id="NP_060626.2">
    <molecule id="Q5THJ4-2"/>
    <property type="nucleotide sequence ID" value="NM_018156.3"/>
</dbReference>
<dbReference type="SMR" id="Q5THJ4"/>
<dbReference type="BioGRID" id="120485">
    <property type="interactions" value="71"/>
</dbReference>
<dbReference type="FunCoup" id="Q5THJ4">
    <property type="interactions" value="704"/>
</dbReference>
<dbReference type="IntAct" id="Q5THJ4">
    <property type="interactions" value="20"/>
</dbReference>
<dbReference type="STRING" id="9606.ENSP00000478104"/>
<dbReference type="GlyCosmos" id="Q5THJ4">
    <property type="glycosylation" value="1 site, 1 glycan"/>
</dbReference>
<dbReference type="GlyGen" id="Q5THJ4">
    <property type="glycosylation" value="8 sites, 1 O-linked glycan (4 sites)"/>
</dbReference>
<dbReference type="iPTMnet" id="Q5THJ4"/>
<dbReference type="PhosphoSitePlus" id="Q5THJ4"/>
<dbReference type="BioMuta" id="VPS13D"/>
<dbReference type="DMDM" id="74756617"/>
<dbReference type="jPOST" id="Q5THJ4"/>
<dbReference type="MassIVE" id="Q5THJ4"/>
<dbReference type="PaxDb" id="9606-ENSP00000478104"/>
<dbReference type="PeptideAtlas" id="Q5THJ4"/>
<dbReference type="ProteomicsDB" id="65151">
    <molecule id="Q5THJ4-1"/>
</dbReference>
<dbReference type="ProteomicsDB" id="65152">
    <molecule id="Q5THJ4-2"/>
</dbReference>
<dbReference type="Pumba" id="Q5THJ4"/>
<dbReference type="Antibodypedia" id="63052">
    <property type="antibodies" value="30 antibodies from 8 providers"/>
</dbReference>
<dbReference type="DNASU" id="55187"/>
<dbReference type="Ensembl" id="ENST00000613099.4">
    <molecule id="Q5THJ4-2"/>
    <property type="protein sequence ID" value="ENSP00000482233.1"/>
    <property type="gene ID" value="ENSG00000048707.15"/>
</dbReference>
<dbReference type="Ensembl" id="ENST00000620676.6">
    <molecule id="Q5THJ4-1"/>
    <property type="protein sequence ID" value="ENSP00000478104.1"/>
    <property type="gene ID" value="ENSG00000048707.15"/>
</dbReference>
<dbReference type="GeneID" id="55187"/>
<dbReference type="KEGG" id="hsa:55187"/>
<dbReference type="MANE-Select" id="ENST00000620676.6">
    <property type="protein sequence ID" value="ENSP00000478104.1"/>
    <property type="RefSeq nucleotide sequence ID" value="NM_015378.4"/>
    <property type="RefSeq protein sequence ID" value="NP_056193.2"/>
</dbReference>
<dbReference type="UCSC" id="uc031tou.2">
    <molecule id="Q5THJ4-1"/>
    <property type="organism name" value="human"/>
</dbReference>
<dbReference type="AGR" id="HGNC:23595"/>
<dbReference type="CTD" id="55187"/>
<dbReference type="DisGeNET" id="55187"/>
<dbReference type="GeneCards" id="VPS13D"/>
<dbReference type="GeneReviews" id="VPS13D"/>
<dbReference type="HGNC" id="HGNC:23595">
    <property type="gene designation" value="VPS13D"/>
</dbReference>
<dbReference type="HPA" id="ENSG00000048707">
    <property type="expression patterns" value="Low tissue specificity"/>
</dbReference>
<dbReference type="MalaCards" id="VPS13D"/>
<dbReference type="MIM" id="607317">
    <property type="type" value="phenotype"/>
</dbReference>
<dbReference type="MIM" id="608877">
    <property type="type" value="gene"/>
</dbReference>
<dbReference type="neXtProt" id="NX_Q5THJ4"/>
<dbReference type="OpenTargets" id="ENSG00000048707"/>
<dbReference type="Orphanet" id="95434">
    <property type="disease" value="Autosomal recessive cerebellar ataxia-movement disorder syndrome"/>
</dbReference>
<dbReference type="PharmGKB" id="PA134970144"/>
<dbReference type="VEuPathDB" id="HostDB:ENSG00000048707"/>
<dbReference type="eggNOG" id="KOG1796">
    <property type="taxonomic scope" value="Eukaryota"/>
</dbReference>
<dbReference type="eggNOG" id="KOG1809">
    <property type="taxonomic scope" value="Eukaryota"/>
</dbReference>
<dbReference type="GeneTree" id="ENSGT00950000183083"/>
<dbReference type="InParanoid" id="Q5THJ4"/>
<dbReference type="OMA" id="IEFVMDQ"/>
<dbReference type="OrthoDB" id="272810at2759"/>
<dbReference type="PAN-GO" id="Q5THJ4">
    <property type="GO annotations" value="4 GO annotations based on evolutionary models"/>
</dbReference>
<dbReference type="PhylomeDB" id="Q5THJ4"/>
<dbReference type="TreeFam" id="TF300316"/>
<dbReference type="PathwayCommons" id="Q5THJ4"/>
<dbReference type="SignaLink" id="Q5THJ4"/>
<dbReference type="BioGRID-ORCS" id="55187">
    <property type="hits" value="590 hits in 1161 CRISPR screens"/>
</dbReference>
<dbReference type="ChiTaRS" id="VPS13D">
    <property type="organism name" value="human"/>
</dbReference>
<dbReference type="GeneWiki" id="VPS13D"/>
<dbReference type="GenomeRNAi" id="55187"/>
<dbReference type="Pharos" id="Q5THJ4">
    <property type="development level" value="Tdark"/>
</dbReference>
<dbReference type="PRO" id="PR:Q5THJ4"/>
<dbReference type="Proteomes" id="UP000005640">
    <property type="component" value="Chromosome 1"/>
</dbReference>
<dbReference type="RNAct" id="Q5THJ4">
    <property type="molecule type" value="protein"/>
</dbReference>
<dbReference type="Bgee" id="ENSG00000048707">
    <property type="expression patterns" value="Expressed in skin of leg and 204 other cell types or tissues"/>
</dbReference>
<dbReference type="ExpressionAtlas" id="Q5THJ4">
    <property type="expression patterns" value="baseline and differential"/>
</dbReference>
<dbReference type="GO" id="GO:0070062">
    <property type="term" value="C:extracellular exosome"/>
    <property type="evidence" value="ECO:0007005"/>
    <property type="project" value="UniProtKB"/>
</dbReference>
<dbReference type="GO" id="GO:0005739">
    <property type="term" value="C:mitochondrion"/>
    <property type="evidence" value="ECO:0006056"/>
    <property type="project" value="FlyBase"/>
</dbReference>
<dbReference type="GO" id="GO:0006869">
    <property type="term" value="P:lipid transport"/>
    <property type="evidence" value="ECO:0007669"/>
    <property type="project" value="UniProtKB-KW"/>
</dbReference>
<dbReference type="GO" id="GO:0007005">
    <property type="term" value="P:mitochondrion organization"/>
    <property type="evidence" value="ECO:0000315"/>
    <property type="project" value="UniProtKB"/>
</dbReference>
<dbReference type="GO" id="GO:1901526">
    <property type="term" value="P:positive regulation of mitophagy"/>
    <property type="evidence" value="ECO:0000315"/>
    <property type="project" value="UniProtKB"/>
</dbReference>
<dbReference type="GO" id="GO:0045053">
    <property type="term" value="P:protein retention in Golgi apparatus"/>
    <property type="evidence" value="ECO:0000318"/>
    <property type="project" value="GO_Central"/>
</dbReference>
<dbReference type="GO" id="GO:0006623">
    <property type="term" value="P:protein targeting to vacuole"/>
    <property type="evidence" value="ECO:0000318"/>
    <property type="project" value="GO_Central"/>
</dbReference>
<dbReference type="CDD" id="cd23453">
    <property type="entry name" value="beta-trefoil_Ricin_VPS13D"/>
    <property type="match status" value="1"/>
</dbReference>
<dbReference type="CDD" id="cd14306">
    <property type="entry name" value="UBA_VP13D"/>
    <property type="match status" value="1"/>
</dbReference>
<dbReference type="FunFam" id="1.10.8.10:FF:000057">
    <property type="entry name" value="Vacuolar protein sorting 13 homolog D"/>
    <property type="match status" value="1"/>
</dbReference>
<dbReference type="Gene3D" id="1.10.8.10">
    <property type="entry name" value="DNA helicase RuvA subunit, C-terminal domain"/>
    <property type="match status" value="1"/>
</dbReference>
<dbReference type="InterPro" id="IPR015940">
    <property type="entry name" value="UBA"/>
</dbReference>
<dbReference type="InterPro" id="IPR009060">
    <property type="entry name" value="UBA-like_sf"/>
</dbReference>
<dbReference type="InterPro" id="IPR041969">
    <property type="entry name" value="VP13D_UBA"/>
</dbReference>
<dbReference type="InterPro" id="IPR026847">
    <property type="entry name" value="VPS13"/>
</dbReference>
<dbReference type="InterPro" id="IPR056747">
    <property type="entry name" value="VPS13-like_M"/>
</dbReference>
<dbReference type="InterPro" id="IPR026854">
    <property type="entry name" value="VPS13_N"/>
</dbReference>
<dbReference type="InterPro" id="IPR009543">
    <property type="entry name" value="VPS13_VAB"/>
</dbReference>
<dbReference type="PANTHER" id="PTHR16166:SF141">
    <property type="entry name" value="INTERMEMBRANE LIPID TRANSFER PROTEIN VPS13D"/>
    <property type="match status" value="1"/>
</dbReference>
<dbReference type="PANTHER" id="PTHR16166">
    <property type="entry name" value="VACUOLAR PROTEIN SORTING-ASSOCIATED PROTEIN VPS13"/>
    <property type="match status" value="1"/>
</dbReference>
<dbReference type="Pfam" id="PF22562">
    <property type="entry name" value="UBA_7"/>
    <property type="match status" value="1"/>
</dbReference>
<dbReference type="Pfam" id="PF25033">
    <property type="entry name" value="VPS13_M"/>
    <property type="match status" value="2"/>
</dbReference>
<dbReference type="Pfam" id="PF12624">
    <property type="entry name" value="VPS13_N"/>
    <property type="match status" value="1"/>
</dbReference>
<dbReference type="Pfam" id="PF25036">
    <property type="entry name" value="VPS13_VAB"/>
    <property type="match status" value="1"/>
</dbReference>
<dbReference type="SMART" id="SM00165">
    <property type="entry name" value="UBA"/>
    <property type="match status" value="1"/>
</dbReference>
<dbReference type="SUPFAM" id="SSF46934">
    <property type="entry name" value="UBA-like"/>
    <property type="match status" value="1"/>
</dbReference>
<dbReference type="PROSITE" id="PS50030">
    <property type="entry name" value="UBA"/>
    <property type="match status" value="1"/>
</dbReference>
<name>VP13D_HUMAN</name>
<accession>Q5THJ4</accession>
<accession>J3KP14</accession>
<accession>Q58F10</accession>
<accession>Q6MZK9</accession>
<accession>Q6ZV12</accession>
<accession>Q709C4</accession>
<accession>Q709C5</accession>
<accession>Q86UB4</accession>
<accession>Q9NSJ3</accession>
<accession>Q9UIM0</accession>
<reference evidence="13 18" key="1">
    <citation type="journal article" date="2004" name="Genomics">
        <title>Analysis of the human VPS13 gene family.</title>
        <authorList>
            <person name="Velayos-Baeza A."/>
            <person name="Vettori A."/>
            <person name="Copley R.R."/>
            <person name="Dobson-Stone C."/>
            <person name="Monaco A.P."/>
        </authorList>
    </citation>
    <scope>NUCLEOTIDE SEQUENCE [MRNA] (ISOFORMS 1 AND 2)</scope>
    <scope>TISSUE SPECIFICITY</scope>
    <source>
        <tissue evidence="5">Lymphoblast</tissue>
    </source>
</reference>
<reference key="2">
    <citation type="journal article" date="2006" name="Nature">
        <title>The DNA sequence and biological annotation of human chromosome 1.</title>
        <authorList>
            <person name="Gregory S.G."/>
            <person name="Barlow K.F."/>
            <person name="McLay K.E."/>
            <person name="Kaul R."/>
            <person name="Swarbreck D."/>
            <person name="Dunham A."/>
            <person name="Scott C.E."/>
            <person name="Howe K.L."/>
            <person name="Woodfine K."/>
            <person name="Spencer C.C.A."/>
            <person name="Jones M.C."/>
            <person name="Gillson C."/>
            <person name="Searle S."/>
            <person name="Zhou Y."/>
            <person name="Kokocinski F."/>
            <person name="McDonald L."/>
            <person name="Evans R."/>
            <person name="Phillips K."/>
            <person name="Atkinson A."/>
            <person name="Cooper R."/>
            <person name="Jones C."/>
            <person name="Hall R.E."/>
            <person name="Andrews T.D."/>
            <person name="Lloyd C."/>
            <person name="Ainscough R."/>
            <person name="Almeida J.P."/>
            <person name="Ambrose K.D."/>
            <person name="Anderson F."/>
            <person name="Andrew R.W."/>
            <person name="Ashwell R.I.S."/>
            <person name="Aubin K."/>
            <person name="Babbage A.K."/>
            <person name="Bagguley C.L."/>
            <person name="Bailey J."/>
            <person name="Beasley H."/>
            <person name="Bethel G."/>
            <person name="Bird C.P."/>
            <person name="Bray-Allen S."/>
            <person name="Brown J.Y."/>
            <person name="Brown A.J."/>
            <person name="Buckley D."/>
            <person name="Burton J."/>
            <person name="Bye J."/>
            <person name="Carder C."/>
            <person name="Chapman J.C."/>
            <person name="Clark S.Y."/>
            <person name="Clarke G."/>
            <person name="Clee C."/>
            <person name="Cobley V."/>
            <person name="Collier R.E."/>
            <person name="Corby N."/>
            <person name="Coville G.J."/>
            <person name="Davies J."/>
            <person name="Deadman R."/>
            <person name="Dunn M."/>
            <person name="Earthrowl M."/>
            <person name="Ellington A.G."/>
            <person name="Errington H."/>
            <person name="Frankish A."/>
            <person name="Frankland J."/>
            <person name="French L."/>
            <person name="Garner P."/>
            <person name="Garnett J."/>
            <person name="Gay L."/>
            <person name="Ghori M.R.J."/>
            <person name="Gibson R."/>
            <person name="Gilby L.M."/>
            <person name="Gillett W."/>
            <person name="Glithero R.J."/>
            <person name="Grafham D.V."/>
            <person name="Griffiths C."/>
            <person name="Griffiths-Jones S."/>
            <person name="Grocock R."/>
            <person name="Hammond S."/>
            <person name="Harrison E.S.I."/>
            <person name="Hart E."/>
            <person name="Haugen E."/>
            <person name="Heath P.D."/>
            <person name="Holmes S."/>
            <person name="Holt K."/>
            <person name="Howden P.J."/>
            <person name="Hunt A.R."/>
            <person name="Hunt S.E."/>
            <person name="Hunter G."/>
            <person name="Isherwood J."/>
            <person name="James R."/>
            <person name="Johnson C."/>
            <person name="Johnson D."/>
            <person name="Joy A."/>
            <person name="Kay M."/>
            <person name="Kershaw J.K."/>
            <person name="Kibukawa M."/>
            <person name="Kimberley A.M."/>
            <person name="King A."/>
            <person name="Knights A.J."/>
            <person name="Lad H."/>
            <person name="Laird G."/>
            <person name="Lawlor S."/>
            <person name="Leongamornlert D.A."/>
            <person name="Lloyd D.M."/>
            <person name="Loveland J."/>
            <person name="Lovell J."/>
            <person name="Lush M.J."/>
            <person name="Lyne R."/>
            <person name="Martin S."/>
            <person name="Mashreghi-Mohammadi M."/>
            <person name="Matthews L."/>
            <person name="Matthews N.S.W."/>
            <person name="McLaren S."/>
            <person name="Milne S."/>
            <person name="Mistry S."/>
            <person name="Moore M.J.F."/>
            <person name="Nickerson T."/>
            <person name="O'Dell C.N."/>
            <person name="Oliver K."/>
            <person name="Palmeiri A."/>
            <person name="Palmer S.A."/>
            <person name="Parker A."/>
            <person name="Patel D."/>
            <person name="Pearce A.V."/>
            <person name="Peck A.I."/>
            <person name="Pelan S."/>
            <person name="Phelps K."/>
            <person name="Phillimore B.J."/>
            <person name="Plumb R."/>
            <person name="Rajan J."/>
            <person name="Raymond C."/>
            <person name="Rouse G."/>
            <person name="Saenphimmachak C."/>
            <person name="Sehra H.K."/>
            <person name="Sheridan E."/>
            <person name="Shownkeen R."/>
            <person name="Sims S."/>
            <person name="Skuce C.D."/>
            <person name="Smith M."/>
            <person name="Steward C."/>
            <person name="Subramanian S."/>
            <person name="Sycamore N."/>
            <person name="Tracey A."/>
            <person name="Tromans A."/>
            <person name="Van Helmond Z."/>
            <person name="Wall M."/>
            <person name="Wallis J.M."/>
            <person name="White S."/>
            <person name="Whitehead S.L."/>
            <person name="Wilkinson J.E."/>
            <person name="Willey D.L."/>
            <person name="Williams H."/>
            <person name="Wilming L."/>
            <person name="Wray P.W."/>
            <person name="Wu Z."/>
            <person name="Coulson A."/>
            <person name="Vaudin M."/>
            <person name="Sulston J.E."/>
            <person name="Durbin R.M."/>
            <person name="Hubbard T."/>
            <person name="Wooster R."/>
            <person name="Dunham I."/>
            <person name="Carter N.P."/>
            <person name="McVean G."/>
            <person name="Ross M.T."/>
            <person name="Harrow J."/>
            <person name="Olson M.V."/>
            <person name="Beck S."/>
            <person name="Rogers J."/>
            <person name="Bentley D.R."/>
        </authorList>
    </citation>
    <scope>NUCLEOTIDE SEQUENCE [LARGE SCALE GENOMIC DNA]</scope>
</reference>
<reference evidence="13 17" key="3">
    <citation type="submission" date="1999-12" db="EMBL/GenBank/DDBJ databases">
        <authorList>
            <person name="Rhodes S."/>
            <person name="Huckle E."/>
        </authorList>
    </citation>
    <scope>NUCLEOTIDE SEQUENCE [LARGE SCALE MRNA] OF 1-2270</scope>
</reference>
<reference evidence="13 15" key="4">
    <citation type="journal article" date="1997" name="DNA Res.">
        <title>Characterization of cDNA clones in size-fractionated cDNA libraries from human brain.</title>
        <authorList>
            <person name="Seki N."/>
            <person name="Ohira M."/>
            <person name="Nagase T."/>
            <person name="Ishikawa K."/>
            <person name="Miyajima N."/>
            <person name="Nakajima D."/>
            <person name="Nomura N."/>
            <person name="Ohara O."/>
        </authorList>
    </citation>
    <scope>NUCLEOTIDE SEQUENCE [LARGE SCALE MRNA] OF 1179-4388 (ISOFORM 1)</scope>
    <source>
        <tissue evidence="15">Brain</tissue>
    </source>
</reference>
<reference evidence="13 16" key="5">
    <citation type="journal article" date="2004" name="Nat. Genet.">
        <title>Complete sequencing and characterization of 21,243 full-length human cDNAs.</title>
        <authorList>
            <person name="Ota T."/>
            <person name="Suzuki Y."/>
            <person name="Nishikawa T."/>
            <person name="Otsuki T."/>
            <person name="Sugiyama T."/>
            <person name="Irie R."/>
            <person name="Wakamatsu A."/>
            <person name="Hayashi K."/>
            <person name="Sato H."/>
            <person name="Nagai K."/>
            <person name="Kimura K."/>
            <person name="Makita H."/>
            <person name="Sekine M."/>
            <person name="Obayashi M."/>
            <person name="Nishi T."/>
            <person name="Shibahara T."/>
            <person name="Tanaka T."/>
            <person name="Ishii S."/>
            <person name="Yamamoto J."/>
            <person name="Saito K."/>
            <person name="Kawai Y."/>
            <person name="Isono Y."/>
            <person name="Nakamura Y."/>
            <person name="Nagahari K."/>
            <person name="Murakami K."/>
            <person name="Yasuda T."/>
            <person name="Iwayanagi T."/>
            <person name="Wagatsuma M."/>
            <person name="Shiratori A."/>
            <person name="Sudo H."/>
            <person name="Hosoiri T."/>
            <person name="Kaku Y."/>
            <person name="Kodaira H."/>
            <person name="Kondo H."/>
            <person name="Sugawara M."/>
            <person name="Takahashi M."/>
            <person name="Kanda K."/>
            <person name="Yokoi T."/>
            <person name="Furuya T."/>
            <person name="Kikkawa E."/>
            <person name="Omura Y."/>
            <person name="Abe K."/>
            <person name="Kamihara K."/>
            <person name="Katsuta N."/>
            <person name="Sato K."/>
            <person name="Tanikawa M."/>
            <person name="Yamazaki M."/>
            <person name="Ninomiya K."/>
            <person name="Ishibashi T."/>
            <person name="Yamashita H."/>
            <person name="Murakawa K."/>
            <person name="Fujimori K."/>
            <person name="Tanai H."/>
            <person name="Kimata M."/>
            <person name="Watanabe M."/>
            <person name="Hiraoka S."/>
            <person name="Chiba Y."/>
            <person name="Ishida S."/>
            <person name="Ono Y."/>
            <person name="Takiguchi S."/>
            <person name="Watanabe S."/>
            <person name="Yosida M."/>
            <person name="Hotuta T."/>
            <person name="Kusano J."/>
            <person name="Kanehori K."/>
            <person name="Takahashi-Fujii A."/>
            <person name="Hara H."/>
            <person name="Tanase T.-O."/>
            <person name="Nomura Y."/>
            <person name="Togiya S."/>
            <person name="Komai F."/>
            <person name="Hara R."/>
            <person name="Takeuchi K."/>
            <person name="Arita M."/>
            <person name="Imose N."/>
            <person name="Musashino K."/>
            <person name="Yuuki H."/>
            <person name="Oshima A."/>
            <person name="Sasaki N."/>
            <person name="Aotsuka S."/>
            <person name="Yoshikawa Y."/>
            <person name="Matsunawa H."/>
            <person name="Ichihara T."/>
            <person name="Shiohata N."/>
            <person name="Sano S."/>
            <person name="Moriya S."/>
            <person name="Momiyama H."/>
            <person name="Satoh N."/>
            <person name="Takami S."/>
            <person name="Terashima Y."/>
            <person name="Suzuki O."/>
            <person name="Nakagawa S."/>
            <person name="Senoh A."/>
            <person name="Mizoguchi H."/>
            <person name="Goto Y."/>
            <person name="Shimizu F."/>
            <person name="Wakebe H."/>
            <person name="Hishigaki H."/>
            <person name="Watanabe T."/>
            <person name="Sugiyama A."/>
            <person name="Takemoto M."/>
            <person name="Kawakami B."/>
            <person name="Yamazaki M."/>
            <person name="Watanabe K."/>
            <person name="Kumagai A."/>
            <person name="Itakura S."/>
            <person name="Fukuzumi Y."/>
            <person name="Fujimori Y."/>
            <person name="Komiyama M."/>
            <person name="Tashiro H."/>
            <person name="Tanigami A."/>
            <person name="Fujiwara T."/>
            <person name="Ono T."/>
            <person name="Yamada K."/>
            <person name="Fujii Y."/>
            <person name="Ozaki K."/>
            <person name="Hirao M."/>
            <person name="Ohmori Y."/>
            <person name="Kawabata A."/>
            <person name="Hikiji T."/>
            <person name="Kobatake N."/>
            <person name="Inagaki H."/>
            <person name="Ikema Y."/>
            <person name="Okamoto S."/>
            <person name="Okitani R."/>
            <person name="Kawakami T."/>
            <person name="Noguchi S."/>
            <person name="Itoh T."/>
            <person name="Shigeta K."/>
            <person name="Senba T."/>
            <person name="Matsumura K."/>
            <person name="Nakajima Y."/>
            <person name="Mizuno T."/>
            <person name="Morinaga M."/>
            <person name="Sasaki M."/>
            <person name="Togashi T."/>
            <person name="Oyama M."/>
            <person name="Hata H."/>
            <person name="Watanabe M."/>
            <person name="Komatsu T."/>
            <person name="Mizushima-Sugano J."/>
            <person name="Satoh T."/>
            <person name="Shirai Y."/>
            <person name="Takahashi Y."/>
            <person name="Nakagawa K."/>
            <person name="Okumura K."/>
            <person name="Nagase T."/>
            <person name="Nomura N."/>
            <person name="Kikuchi H."/>
            <person name="Masuho Y."/>
            <person name="Yamashita R."/>
            <person name="Nakai K."/>
            <person name="Yada T."/>
            <person name="Nakamura Y."/>
            <person name="Ohara O."/>
            <person name="Isogai T."/>
            <person name="Sugano S."/>
        </authorList>
    </citation>
    <scope>NUCLEOTIDE SEQUENCE [LARGE SCALE MRNA] OF 2039-3635 (ISOFORM 2)</scope>
    <source>
        <tissue evidence="16">Tongue</tissue>
    </source>
</reference>
<reference key="6">
    <citation type="journal article" date="2007" name="BMC Genomics">
        <title>The full-ORF clone resource of the German cDNA consortium.</title>
        <authorList>
            <person name="Bechtel S."/>
            <person name="Rosenfelder H."/>
            <person name="Duda A."/>
            <person name="Schmidt C.P."/>
            <person name="Ernst U."/>
            <person name="Wellenreuther R."/>
            <person name="Mehrle A."/>
            <person name="Schuster C."/>
            <person name="Bahr A."/>
            <person name="Bloecker H."/>
            <person name="Heubner D."/>
            <person name="Hoerlein A."/>
            <person name="Michel G."/>
            <person name="Wedler H."/>
            <person name="Koehrer K."/>
            <person name="Ottenwaelder B."/>
            <person name="Poustka A."/>
            <person name="Wiemann S."/>
            <person name="Schupp I."/>
        </authorList>
    </citation>
    <scope>NUCLEOTIDE SEQUENCE [LARGE SCALE MRNA] OF 2094-4388 (ISOFORM 2)</scope>
    <source>
        <tissue>Fetal kidney</tissue>
    </source>
</reference>
<reference evidence="13 14" key="7">
    <citation type="journal article" date="2004" name="Genome Res.">
        <title>The status, quality, and expansion of the NIH full-length cDNA project: the Mammalian Gene Collection (MGC).</title>
        <authorList>
            <consortium name="The MGC Project Team"/>
        </authorList>
    </citation>
    <scope>NUCLEOTIDE SEQUENCE [LARGE SCALE MRNA] OF 2980-4388</scope>
    <source>
        <tissue evidence="14">Testis</tissue>
    </source>
</reference>
<reference key="8">
    <citation type="journal article" date="2008" name="Proc. Natl. Acad. Sci. U.S.A.">
        <title>A quantitative atlas of mitotic phosphorylation.</title>
        <authorList>
            <person name="Dephoure N."/>
            <person name="Zhou C."/>
            <person name="Villen J."/>
            <person name="Beausoleil S.A."/>
            <person name="Bakalarski C.E."/>
            <person name="Elledge S.J."/>
            <person name="Gygi S.P."/>
        </authorList>
    </citation>
    <scope>PHOSPHORYLATION [LARGE SCALE ANALYSIS] AT THR-1761</scope>
    <scope>IDENTIFICATION BY MASS SPECTROMETRY [LARGE SCALE ANALYSIS]</scope>
    <source>
        <tissue>Cervix carcinoma</tissue>
    </source>
</reference>
<reference key="9">
    <citation type="journal article" date="2009" name="Sci. Signal.">
        <title>Quantitative phosphoproteomic analysis of T cell receptor signaling reveals system-wide modulation of protein-protein interactions.</title>
        <authorList>
            <person name="Mayya V."/>
            <person name="Lundgren D.H."/>
            <person name="Hwang S.-I."/>
            <person name="Rezaul K."/>
            <person name="Wu L."/>
            <person name="Eng J.K."/>
            <person name="Rodionov V."/>
            <person name="Han D.K."/>
        </authorList>
    </citation>
    <scope>PHOSPHORYLATION [LARGE SCALE ANALYSIS] AT THR-1761 AND SER-2435</scope>
    <scope>IDENTIFICATION BY MASS SPECTROMETRY [LARGE SCALE ANALYSIS]</scope>
    <source>
        <tissue>Leukemic T-cell</tissue>
    </source>
</reference>
<reference key="10">
    <citation type="journal article" date="2009" name="Science">
        <title>Lysine acetylation targets protein complexes and co-regulates major cellular functions.</title>
        <authorList>
            <person name="Choudhary C."/>
            <person name="Kumar C."/>
            <person name="Gnad F."/>
            <person name="Nielsen M.L."/>
            <person name="Rehman M."/>
            <person name="Walther T.C."/>
            <person name="Olsen J.V."/>
            <person name="Mann M."/>
        </authorList>
    </citation>
    <scope>ACETYLATION [LARGE SCALE ANALYSIS] AT LYS-3524</scope>
    <scope>IDENTIFICATION BY MASS SPECTROMETRY [LARGE SCALE ANALYSIS]</scope>
</reference>
<reference key="11">
    <citation type="journal article" date="2010" name="Sci. Signal.">
        <title>Quantitative phosphoproteomics reveals widespread full phosphorylation site occupancy during mitosis.</title>
        <authorList>
            <person name="Olsen J.V."/>
            <person name="Vermeulen M."/>
            <person name="Santamaria A."/>
            <person name="Kumar C."/>
            <person name="Miller M.L."/>
            <person name="Jensen L.J."/>
            <person name="Gnad F."/>
            <person name="Cox J."/>
            <person name="Jensen T.S."/>
            <person name="Nigg E.A."/>
            <person name="Brunak S."/>
            <person name="Mann M."/>
        </authorList>
    </citation>
    <scope>PHOSPHORYLATION [LARGE SCALE ANALYSIS] AT SER-1042</scope>
    <scope>IDENTIFICATION BY MASS SPECTROMETRY [LARGE SCALE ANALYSIS]</scope>
    <source>
        <tissue>Cervix carcinoma</tissue>
    </source>
</reference>
<reference key="12">
    <citation type="journal article" date="2011" name="Sci. Signal.">
        <title>System-wide temporal characterization of the proteome and phosphoproteome of human embryonic stem cell differentiation.</title>
        <authorList>
            <person name="Rigbolt K.T."/>
            <person name="Prokhorova T.A."/>
            <person name="Akimov V."/>
            <person name="Henningsen J."/>
            <person name="Johansen P.T."/>
            <person name="Kratchmarova I."/>
            <person name="Kassem M."/>
            <person name="Mann M."/>
            <person name="Olsen J.V."/>
            <person name="Blagoev B."/>
        </authorList>
    </citation>
    <scope>PHOSPHORYLATION [LARGE SCALE ANALYSIS] AT SER-2435</scope>
    <scope>IDENTIFICATION BY MASS SPECTROMETRY [LARGE SCALE ANALYSIS]</scope>
</reference>
<reference key="13">
    <citation type="journal article" date="2013" name="J. Proteome Res.">
        <title>Toward a comprehensive characterization of a human cancer cell phosphoproteome.</title>
        <authorList>
            <person name="Zhou H."/>
            <person name="Di Palma S."/>
            <person name="Preisinger C."/>
            <person name="Peng M."/>
            <person name="Polat A.N."/>
            <person name="Heck A.J."/>
            <person name="Mohammed S."/>
        </authorList>
    </citation>
    <scope>PHOSPHORYLATION [LARGE SCALE ANALYSIS] AT SER-663; SER-1034; SER-1038; SER-1042; SER-1138; SER-1598; SER-1603; SER-1699; THR-1761; SER-2671; SER-2861; SER-2864 AND SER-2983</scope>
    <scope>IDENTIFICATION BY MASS SPECTROMETRY [LARGE SCALE ANALYSIS]</scope>
    <source>
        <tissue>Cervix carcinoma</tissue>
        <tissue>Erythroleukemia</tissue>
    </source>
</reference>
<reference key="14">
    <citation type="journal article" date="2014" name="J. Proteomics">
        <title>An enzyme assisted RP-RPLC approach for in-depth analysis of human liver phosphoproteome.</title>
        <authorList>
            <person name="Bian Y."/>
            <person name="Song C."/>
            <person name="Cheng K."/>
            <person name="Dong M."/>
            <person name="Wang F."/>
            <person name="Huang J."/>
            <person name="Sun D."/>
            <person name="Wang L."/>
            <person name="Ye M."/>
            <person name="Zou H."/>
        </authorList>
    </citation>
    <scope>PHOSPHORYLATION [LARGE SCALE ANALYSIS] AT SER-663; SER-1138; SER-1341; THR-1761; SER-1765 AND SER-2671</scope>
    <scope>IDENTIFICATION BY MASS SPECTROMETRY [LARGE SCALE ANALYSIS]</scope>
    <source>
        <tissue>Liver</tissue>
    </source>
</reference>
<reference key="15">
    <citation type="journal article" date="2018" name="Curr. Biol.">
        <title>Vps13D Encodes a Ubiquitin-Binding Protein that Is Required for the Regulation of Mitochondrial Size and Clearance.</title>
        <authorList>
            <person name="Anding A.L."/>
            <person name="Wang C."/>
            <person name="Chang T.K."/>
            <person name="Sliter D.A."/>
            <person name="Powers C.M."/>
            <person name="Hofmann K."/>
            <person name="Youle R.J."/>
            <person name="Baehrecke E.H."/>
        </authorList>
    </citation>
    <scope>FUNCTION</scope>
    <scope>DOMAIN</scope>
</reference>
<reference key="16">
    <citation type="journal article" date="2018" name="Ann. Neurol.">
        <title>Mutations in VPS13D lead to a new recessive ataxia with spasticity and mitochondrial defects.</title>
        <authorList>
            <person name="Seong E."/>
            <person name="Insolera R."/>
            <person name="Dulovic M."/>
            <person name="Kamsteeg E.J."/>
            <person name="Trinh J."/>
            <person name="Brueggemann N."/>
            <person name="Sandford E."/>
            <person name="Li S."/>
            <person name="Ozel A.B."/>
            <person name="Li J.Z."/>
            <person name="Jewett T."/>
            <person name="Kievit A.J.A."/>
            <person name="Muenchau A."/>
            <person name="Shakkottai V."/>
            <person name="Klein C."/>
            <person name="Collins C.A."/>
            <person name="Lohmann K."/>
            <person name="van de Warrenburg B.P."/>
            <person name="Burmeister M."/>
        </authorList>
    </citation>
    <scope>FUNCTION</scope>
    <scope>INVOLVEMENT IN SCAR4</scope>
    <scope>VARIANTS SCAR4 662-GLN--SER-4388 DEL; 1106-GLN--SER-4388 DEL; ASP-1190; LEU-1307; 1803-TYR--SER-4388 DEL; 2277-LEU--SER-4388 DEL; 2572-GLN--SER-4388 DEL; ILE-4107; SER-4149 AND VAL-4210</scope>
    <scope>CHARACTERIZATION OF VARIANTS SCAR4 1106-GLN--SER-4388 DEL; ASP-1190; 1803-TYR--SER-4388 DEL AND VAL-4210</scope>
</reference>
<reference key="17">
    <citation type="journal article" date="2018" name="Ann. Neurol.">
        <title>Recessive mutations in VPS13D cause childhood onset movement disorders.</title>
        <authorList>
            <person name="Gauthier J."/>
            <person name="Meijer I.A."/>
            <person name="Lessel D."/>
            <person name="Mencacci N.E."/>
            <person name="Krainc D."/>
            <person name="Hempel M."/>
            <person name="Tsiakas K."/>
            <person name="Prokisch H."/>
            <person name="Rossignol E."/>
            <person name="Helm M.H."/>
            <person name="Rodan L.H."/>
            <person name="Karamchandani J."/>
            <person name="Carecchio M."/>
            <person name="Lubbe S.J."/>
            <person name="Telegrafi A."/>
            <person name="Henderson L.B."/>
            <person name="Lorenzo K."/>
            <person name="Wallace S.E."/>
            <person name="Glass I.A."/>
            <person name="Hamdan F.F."/>
            <person name="Michaud J.L."/>
            <person name="Rouleau G.A."/>
            <person name="Campeau P.M."/>
        </authorList>
    </citation>
    <scope>INVOLVEMENT IN SCAR4</scope>
    <scope>VARIANTS SCAR4 ALA-865; ASP-1200; SER-2900; GLN-3253; SER-3521 AND GLN-4228</scope>
</reference>
<reference key="18">
    <citation type="journal article" date="2024" name="Gene">
        <title>Clinical and molecular heterogeneity of VPS13D-related neurodevelopmental and movement disorders.</title>
        <authorList>
            <person name="Sultan T."/>
            <person name="Scorrano G."/>
            <person name="Panciroli M."/>
            <person name="Christoforou M."/>
            <person name="Raza Alvi J."/>
            <person name="Di Ludovico A."/>
            <person name="Qureshi S."/>
            <person name="Efthymiou S."/>
            <person name="Salpietro V."/>
            <person name="Houlden H."/>
        </authorList>
    </citation>
    <scope>VARIANT THR-1908</scope>
</reference>
<keyword id="KW-0007">Acetylation</keyword>
<keyword id="KW-0025">Alternative splicing</keyword>
<keyword id="KW-0225">Disease variant</keyword>
<keyword id="KW-0445">Lipid transport</keyword>
<keyword id="KW-0523">Neurodegeneration</keyword>
<keyword id="KW-0597">Phosphoprotein</keyword>
<keyword id="KW-1267">Proteomics identification</keyword>
<keyword id="KW-1185">Reference proteome</keyword>
<keyword id="KW-0813">Transport</keyword>
<comment type="function">
    <text evidence="1 6 8">Mediates the transfer of lipids between membranes at organelle contact sites (By similarity). Functions in promoting mitochondrial clearance by mitochondrial autophagy (mitophagy), also possibly by positively regulating mitochondrial fission (PubMed:29307555, PubMed:29604224). Mitophagy plays an important role in regulating cell health and mitochondrial size and homeostasis.</text>
</comment>
<comment type="alternative products">
    <event type="alternative splicing"/>
    <isoform>
        <id>Q5THJ4-1</id>
        <name evidence="5">1</name>
        <name evidence="5">1A</name>
        <sequence type="displayed"/>
    </isoform>
    <isoform>
        <id>Q5THJ4-2</id>
        <name evidence="5">2</name>
        <name evidence="5">2A</name>
        <sequence type="described" ref="VSP_052249"/>
    </isoform>
</comment>
<comment type="tissue specificity">
    <text evidence="5">Widely expressed.</text>
</comment>
<comment type="domain">
    <text evidence="6">The UBA domain is required for mitochondrial size regulation.</text>
</comment>
<comment type="disease" evidence="7 8">
    <disease id="DI-05339">
        <name>Spinocerebellar ataxia, autosomal recessive 4</name>
        <acronym>SCAR4</acronym>
        <description>A form of spinocerebellar ataxia, a clinically and genetically heterogeneous group of cerebellar disorders due to degeneration of the cerebellum with variable involvement of the brainstem and spinal cord. SCAR4 patients manifest ataxic gait with spasticity and hyperreflexia of the lower limbs resulting in difficulty walking. The age at onset is highly variable, ranging from early childhood to adulthood.</description>
        <dbReference type="MIM" id="607317"/>
    </disease>
    <text>The disease is caused by variants affecting the gene represented in this entry.</text>
</comment>
<comment type="similarity">
    <text evidence="2">Belongs to the VPS13 family.</text>
</comment>
<comment type="sequence caution" evidence="13">
    <conflict type="frameshift">
        <sequence resource="EMBL-CDS" id="BAC86054"/>
    </conflict>
</comment>
<comment type="sequence caution" evidence="13">
    <conflict type="frameshift">
        <sequence resource="EMBL-CDS" id="CAE46021"/>
    </conflict>
</comment>
<gene>
    <name evidence="18 19" type="primary">VPS13D</name>
    <name evidence="15" type="synonym">KIAA0453</name>
</gene>
<proteinExistence type="evidence at protein level"/>
<sequence>MLEGLVAWVLNTYLGKYVNNLNTDQLSVALLKGAVELENLPLKKDALKELELPFEVKAGFIGKVTLQIPFYRPHVDPWVISISSLHLIGAPEKIQDFNDEKEKLLERERKKALLQALEEKWKNDRQQKGESYWYSVTASVVTRIVENIELKIQDVHLRFEDGVTNPSHPFAFGICIKNVSMQNAVNEPVQKLMRKKQLDVAEFSIYWDVDCTLLGDLPQMELQEAMARSMESRSHHYVLEPVFASALLKRNCSKKPLRSRHSPRIDCDIQLETIPLKLSQLQYRQIMEFLKELERKERQVKFRRWKPKVAISKNCREWWYFALNANLYEIREQRKRCTWDFMLHRARDAVSYTDKYFNKLKGGLLSTDDKEEMCRIEEEQSFEELKILRELVHDRFHKQEELAESLREPQFDSPGACPGAPEPGGGSGMLQYLQSWFPGWGGWYGQQTPEGNVVEGLSAEQQEQWIPEEILGTEEFFDPTADASCMNTYTKRDHVFAKLNLQLQRGTVTLLHKEQGTPQMNESAFMQLEFSDVKLLAESLPRRNSSLLSVRLGGLFLRDLATEGTMFPLLVFPNPQKEVGRVSQSFGLQTTSADRSDHYPAADPDGPVFEMLYERNPAHSHFERRLNVSTRPLNIIYNPQAIKKVADFFYKGKVHTSGFGYQSELELRVAEAARRQYNKLKMQTKAEIRQTLDRLLVGDFIEESKRWTVRLDISAPQVIFPDDFKFKNPVLVVVDLGRMLLTNTQDNSRRKSRDGSASEETQFSDDEYKTPLATPPNTPPPESSSSNGEKTPPFSGVEFSEEQLQAHLMSTKMYERYSLSFMDLQIMVGRVKDNWKHVQDIDVGPTHVVEKFNVHLQLERRLIYTSDPKYPGAVLSGNLPDLKIHINEDKISALKNCFALLTTPEMKTSDTQIKEKIFPQEEQRGSLQDSVMNLTQSIVLLEQHTREVLVESQLLLAEFKVNCMQLGVESNGRYISVLKVFGTNAHFVKRPYDAEVSLTVHGLLLVDTMQTYGADFDLLMASHKNLSFDIPTGSLRDSRAQSPVSGPNVAHLTDGATLNDRSATSVSLDKILTKEQESLIKLEYQFVSSECPSMNLDSTLQVISLQVNNLDIILNPETIVELIGFLQKSFPKEKDDLSPQPLMTDFERSFREQGTYQSTYEQNTEVAVEIHRLNLLLLRTVGMANREKYGRKIATASIGGTKVNVSMGSTFDMNGSLGCLQLMDLTQDNVKNQYVVSIGNSVGYENIISDIGYFESVFVRMEDAALTEALSFTFVERSKQECFLNLKMASLHYNHSAKFLKELTLSMDELEENFRGMLKSAATKVTTVLATKTAEYSEMVSLFETPRKTREPFILEENEIYGFDLASSHLDTVKLILNINIESPVVSIPRKPGSPELLVGHLGQIFIQNFVAGDDESRSDRLQVEIKDIKLYSLNCTQLAGREAVGSEGSRMFCPPSGSGSANSQEEAHFTRHDFFESLHRGQAFHILNNTTIQFKLEKIPIERESELTFSLSPDDLGTSSIMKIEGKFVNPVQVVLAKHVYEQVLQTLDNLVYSEDLNKYPASATSSPCPDSPLPPLSTCGESSVERKENGLFSHSSLSNTSQKSLSVKEVKSFTQIQATFCISELQVQLSGDLTLGAQGLVSLKFQDFEVEFSKDHPQTLSIQIALHSLLMEDLLEKNPDSKYKNLMVSRGAPKPSSLAQKEYLSQSCPSVSNVEYPDMPRSLPSHMEEAPNVFQLYQRPTSASRKKQKEVQDKDYPLTPPPSPTVDEPKILVGKSKFDDSLVHINIFLVDKKHPEFSSSYNRVNRSIDVDFNCLDVLITLQTWVVILDFFGIGSTADNHAMRLPPEGILHNVKLEPHASMESGLQDPVNTKLDLKVHSLSLVLNKTTSELAKANVSKLVAHLEMIEGDLALQGSIGSLSLSDLTCHGEFYRERFTTSGEEALIFQTFKYGRPDPLLRREHDIRVSLRMASVQYVHTQRFQAEVVAFIQHFTQLQDVLGRQRAAIEGQTVRDQAQRCSRVLLDIEAGAPVLLIPESSRSNNLIVANLGKLKVKNKFLFAGFPGTFSLQDKESVPSASPTGIPKHSLRKTTSTEEPRGTHSQGQFTMPLAGMSLGSLKSEFVPSTSTKQQGPQPTLSVGQESSSPEDHVCLLDCVVVDLQDMDIFAAERHPREYSKAPEDSSGDLIFPSYFVRQTGGSLLTEPCRLKLQVERNLDKEISHTVPDISIHGNLSSVHCSLDLYKYKLIRGLLENNLGEPIEEFMRPYDLQDPRIHTVLSGEVYTCMCFLIDMVNVSLELKDPKRKEGAGSLARFDFKKCKLLYESFSNQTKSINLVSHSMMAFDTRYAGQKTSPGMTNVFSCIFQPAKNSSTTQGSIQIELHFRSTKDSSCFTVVLNNLRVFLIFDWLLLVHDFLHTPSDIKKQNHVTPSRHRNSSSESAIVPKTVKSGVVTKRSSLPVSNERHLEVKVNVTGTEFVVIEDVSCFDTNAIILKGTTVLTYKPRFVDRPFSGSLFGIEVFSCRLGNEHDTALSIVDPVQIQMELVGNSSYQNSSGLMDAFNSEDFPPVLEIQLQALDIRLSYNDVQLFLAIAKSIPEQANAAVPDSVALESDSVGTYLPGASRVGEEIREGTRHTLDPVLELQLARLQELGFSMDDCRKALLACQGQLKKAASWLFKNAEPLKSLSLASTSRDSPGAVAAPLISGVEIKAESVCICFIDDCMDCDVPLAELTFSRLNFLQRVRTSPEGYAHFTLSGDYYNRALSGWEPFIEPWPCSVSWQQQAASRLHPPRLKLEAKAKPRLDINITSVLIDQYVSTKESWMADYCKDDKDIESAKSEDWMGSSVDPPCFGQSLPLVYLRTRSTASLTNLEHQIYARAEVKTPKRRQPFVPFALRNHTGCTLWFATLTTTPTRAALSHSGSPGVVPEGNGTFLDDTHNVSEWREVLTGEEIPFEFEARGKLRHRHTHDLRIHQLQVRVNGWEQVSPVSVDKVGTFFRYAAPDKNSSSSTIGSPSSRTNIIHPQVYFSSLPPVRVVFAVTMEGSARKVITVRSALIVRNRLETPMELRLDSPSAPDKPVVLPAIMPGDSFAVPLHLTSWRLQARPKGLGVFFCKAPIHWTNVVKTAEISSSKRECHSMDTEKSRFFRFCVAIKKENYPDYMPSNIFSDSAKQIFRQPGHTIYLLPTVVICNLLPCELDFYVKGMPINGTLKPGKEAALHTADTSQNIELGVSLENFPLCKELLIPPGTQNYMVRMRLYDVNRRQLNLTIRIVCRAEGSLKIFISAPYWLINKTGLPLIFRQDNAKTDAAGQFEEHELARSLSPLLFCYADKEQPNLCTMRIGRGIHPEGMPGWCQGFSLDGGSGVRALKVIQQGNRPGLIYNIGIDVKKGRGRYIDTCMVIFAPRYLLDNKSSHKLAFAQREFARGQGTANPEGYISTLPGSSVVFHWPRNDYDQLLCVRLMDVPNCIWSGGFEVNKNNSFHINMRDTLGKCFFLRVEITLRGATYRISFSDTDQLPPPFRIDNFSKVPVVFTQHGVAEPRLRTEVKPMTSLDYAWDEPTLPPFITLTVKGAGSSEINCNMNDFQDNRQLYYENFIYIAATYTFSGLQEGTGRPVASNKAITCAELVLDVSPKTQRVILKKKEPGKRSQLWRMTGTGMLAHEGSSVPHNPNKPSAARSTEGSAILDIAGLAAVTDNRYEPLMLRKPDRRRSTTQTWSFREGKLTCGLHGLVVQAKGGLSGLFDGAEVVLGPDTSMELLGPVPPEQQFINQKMRPGSGMLSIRVIPDGPTRALQITDFCHRKSSRSYEVDELPVTEQELQKLKNPDTEQELEVLVRLEGGIGLSLINKVPEELVFASLTGINVHYTQLATSHMLELSIQDVQVDNQLIGTTQPFMLYVTPLSNENEVIETGPAVQVNAVKFPSKSALTNIYKHLMITAQRFTVQIEEKLLLKLLSFFGYDQAESEVEKYDENLHEKTAEQGGTPIRYYFENLKISIPQIKLSVFTSNKLPLDLKALKSTLGFPLIRFEDAVINLDPFTRVHPYETKEFIINDILKHFQEELLSQAARILGSVDFLGNPMGLLNDVSEGVTGLIKYGNVGGLIRNVTHGVSNSAAKFAGTLSDGLGKTMDNRHQSEREYIRYHAATSGEHLVAGIHGLAHGIIGGLTSVITSTVEGVKTEGGVSGFISGLGKGLVGTVTKPVAGALDFASETAQAVRDTATLSGPRTQAQRVRKPRCCTGPQGLLPRYSESQAEGQEQLFKLTDNIQDEFFIAVENIDSYCVLISSKAVYFLKSGDYVDREAIFLEVKYDDLYHCLVSKDHGKVYVQVTKKAVSTSSGVSIPGPSHQKPMVHVKSEVLAVKLSQEINYAKSLYYEQQLMLRLSENREQLELDS</sequence>
<evidence type="ECO:0000250" key="1">
    <source>
        <dbReference type="UniProtKB" id="Q07878"/>
    </source>
</evidence>
<evidence type="ECO:0000255" key="2"/>
<evidence type="ECO:0000255" key="3">
    <source>
        <dbReference type="PROSITE-ProRule" id="PRU00212"/>
    </source>
</evidence>
<evidence type="ECO:0000256" key="4">
    <source>
        <dbReference type="SAM" id="MobiDB-lite"/>
    </source>
</evidence>
<evidence type="ECO:0000269" key="5">
    <source>
    </source>
</evidence>
<evidence type="ECO:0000269" key="6">
    <source>
    </source>
</evidence>
<evidence type="ECO:0000269" key="7">
    <source>
    </source>
</evidence>
<evidence type="ECO:0000269" key="8">
    <source>
    </source>
</evidence>
<evidence type="ECO:0000269" key="9">
    <source>
    </source>
</evidence>
<evidence type="ECO:0000303" key="10">
    <source>
    </source>
</evidence>
<evidence type="ECO:0000303" key="11">
    <source>
    </source>
</evidence>
<evidence type="ECO:0000303" key="12">
    <source>
    </source>
</evidence>
<evidence type="ECO:0000305" key="13"/>
<evidence type="ECO:0000312" key="14">
    <source>
        <dbReference type="EMBL" id="AAH51804.1"/>
    </source>
</evidence>
<evidence type="ECO:0000312" key="15">
    <source>
        <dbReference type="EMBL" id="BAA32298.3"/>
    </source>
</evidence>
<evidence type="ECO:0000312" key="16">
    <source>
        <dbReference type="EMBL" id="BAC86054.1"/>
    </source>
</evidence>
<evidence type="ECO:0000312" key="17">
    <source>
        <dbReference type="EMBL" id="CAB82724.1"/>
    </source>
</evidence>
<evidence type="ECO:0000312" key="18">
    <source>
        <dbReference type="EMBL" id="CAE75586.1"/>
    </source>
</evidence>
<evidence type="ECO:0000312" key="19">
    <source>
        <dbReference type="HGNC" id="HGNC:23595"/>
    </source>
</evidence>
<evidence type="ECO:0007744" key="20">
    <source>
    </source>
</evidence>
<evidence type="ECO:0007744" key="21">
    <source>
    </source>
</evidence>
<evidence type="ECO:0007744" key="22">
    <source>
    </source>
</evidence>
<evidence type="ECO:0007744" key="23">
    <source>
    </source>
</evidence>
<evidence type="ECO:0007744" key="24">
    <source>
    </source>
</evidence>
<evidence type="ECO:0007744" key="25">
    <source>
    </source>
</evidence>
<evidence type="ECO:0007744" key="26">
    <source>
    </source>
</evidence>
<protein>
    <recommendedName>
        <fullName evidence="13">Intermembrane lipid transfer protein VPS13D</fullName>
    </recommendedName>
    <alternativeName>
        <fullName>Vacuolar protein sorting-associated protein 13D</fullName>
    </alternativeName>
</protein>
<organism>
    <name type="scientific">Homo sapiens</name>
    <name type="common">Human</name>
    <dbReference type="NCBI Taxonomy" id="9606"/>
    <lineage>
        <taxon>Eukaryota</taxon>
        <taxon>Metazoa</taxon>
        <taxon>Chordata</taxon>
        <taxon>Craniata</taxon>
        <taxon>Vertebrata</taxon>
        <taxon>Euteleostomi</taxon>
        <taxon>Mammalia</taxon>
        <taxon>Eutheria</taxon>
        <taxon>Euarchontoglires</taxon>
        <taxon>Primates</taxon>
        <taxon>Haplorrhini</taxon>
        <taxon>Catarrhini</taxon>
        <taxon>Hominidae</taxon>
        <taxon>Homo</taxon>
    </lineage>
</organism>
<feature type="chain" id="PRO_0000262951" description="Intermembrane lipid transfer protein VPS13D">
    <location>
        <begin position="1"/>
        <end position="4388"/>
    </location>
</feature>
<feature type="domain" description="Chorein N-terminal" evidence="2">
    <location>
        <begin position="2"/>
        <end position="115"/>
    </location>
</feature>
<feature type="domain" description="UBA" evidence="3">
    <location>
        <begin position="2633"/>
        <end position="2676"/>
    </location>
</feature>
<feature type="domain" description="SHR-BD" evidence="2">
    <location>
        <begin position="3276"/>
        <end position="3558"/>
    </location>
</feature>
<feature type="region of interest" description="Disordered" evidence="4">
    <location>
        <begin position="745"/>
        <end position="796"/>
    </location>
</feature>
<feature type="region of interest" description="Disordered" evidence="4">
    <location>
        <begin position="1563"/>
        <end position="1582"/>
    </location>
</feature>
<feature type="region of interest" description="Disordered" evidence="4">
    <location>
        <begin position="1741"/>
        <end position="1771"/>
    </location>
</feature>
<feature type="region of interest" description="Disordered" evidence="4">
    <location>
        <begin position="2070"/>
        <end position="2108"/>
    </location>
</feature>
<feature type="region of interest" description="Disordered" evidence="4">
    <location>
        <begin position="2122"/>
        <end position="2145"/>
    </location>
</feature>
<feature type="compositionally biased region" description="Basic and acidic residues" evidence="4">
    <location>
        <begin position="747"/>
        <end position="756"/>
    </location>
</feature>
<feature type="compositionally biased region" description="Pro residues" evidence="4">
    <location>
        <begin position="773"/>
        <end position="782"/>
    </location>
</feature>
<feature type="compositionally biased region" description="Polar residues" evidence="4">
    <location>
        <begin position="2123"/>
        <end position="2144"/>
    </location>
</feature>
<feature type="modified residue" description="Phosphoserine" evidence="25 26">
    <location>
        <position position="663"/>
    </location>
</feature>
<feature type="modified residue" description="Phosphoserine" evidence="25">
    <location>
        <position position="1034"/>
    </location>
</feature>
<feature type="modified residue" description="Phosphoserine" evidence="25">
    <location>
        <position position="1038"/>
    </location>
</feature>
<feature type="modified residue" description="Phosphoserine" evidence="23 25">
    <location>
        <position position="1042"/>
    </location>
</feature>
<feature type="modified residue" description="Phosphoserine" evidence="25 26">
    <location>
        <position position="1138"/>
    </location>
</feature>
<feature type="modified residue" description="Phosphoserine" evidence="26">
    <location>
        <position position="1341"/>
    </location>
</feature>
<feature type="modified residue" description="Phosphoserine" evidence="25">
    <location>
        <position position="1598"/>
    </location>
</feature>
<feature type="modified residue" description="Phosphoserine" evidence="25">
    <location>
        <position position="1603"/>
    </location>
</feature>
<feature type="modified residue" description="Phosphoserine" evidence="25">
    <location>
        <position position="1699"/>
    </location>
</feature>
<feature type="modified residue" description="Phosphothreonine" evidence="20 22 25 26">
    <location>
        <position position="1761"/>
    </location>
</feature>
<feature type="modified residue" description="Phosphoserine" evidence="26">
    <location>
        <position position="1765"/>
    </location>
</feature>
<feature type="modified residue" description="Phosphoserine" evidence="22 24">
    <location>
        <position position="2435"/>
    </location>
</feature>
<feature type="modified residue" description="Phosphoserine" evidence="25 26">
    <location>
        <position position="2671"/>
    </location>
</feature>
<feature type="modified residue" description="Phosphoserine" evidence="25">
    <location>
        <position position="2861"/>
    </location>
</feature>
<feature type="modified residue" description="Phosphoserine" evidence="25">
    <location>
        <position position="2864"/>
    </location>
</feature>
<feature type="modified residue" description="Phosphoserine" evidence="25">
    <location>
        <position position="2983"/>
    </location>
</feature>
<feature type="modified residue" description="N6-acetyllysine" evidence="21">
    <location>
        <position position="3524"/>
    </location>
</feature>
<feature type="splice variant" id="VSP_052249" description="In isoform 2." evidence="10 11 12">
    <original>SLPLVYLRTRSTASLTNLEHQIYARA</original>
    <variation>T</variation>
    <location>
        <begin position="2851"/>
        <end position="2876"/>
    </location>
</feature>
<feature type="sequence variant" id="VAR_029557" description="In dbSNP:rs12057307.">
    <original>A</original>
    <variation>T</variation>
    <location>
        <position position="225"/>
    </location>
</feature>
<feature type="sequence variant" id="VAR_081496" description="In SCAR4." evidence="8">
    <location>
        <begin position="662"/>
        <end position="4388"/>
    </location>
</feature>
<feature type="sequence variant" id="VAR_080911" description="In SCAR4; dbSNP:rs1383958401." evidence="7">
    <original>T</original>
    <variation>A</variation>
    <location>
        <position position="865"/>
    </location>
</feature>
<feature type="sequence variant" id="VAR_081497" description="In SCAR4; altered mitochondrial morphology in patient cells." evidence="8">
    <location>
        <begin position="1106"/>
        <end position="4388"/>
    </location>
</feature>
<feature type="sequence variant" id="VAR_081498" description="In SCAR4; altered mitochondrial morphology in patient cells; dbSNP:rs1557680919." evidence="8">
    <original>G</original>
    <variation>D</variation>
    <location>
        <position position="1190"/>
    </location>
</feature>
<feature type="sequence variant" id="VAR_080912" description="In SCAR4; dbSNP:rs768331333." evidence="7">
    <original>G</original>
    <variation>D</variation>
    <location>
        <position position="1200"/>
    </location>
</feature>
<feature type="sequence variant" id="VAR_081499" description="In SCAR4; uncertain significance; dbSNP:rs775845475." evidence="8">
    <original>M</original>
    <variation>L</variation>
    <location>
        <position position="1307"/>
    </location>
</feature>
<feature type="sequence variant" id="VAR_029558" description="In dbSNP:rs12407578.">
    <original>S</original>
    <variation>L</variation>
    <location>
        <position position="1341"/>
    </location>
</feature>
<feature type="sequence variant" id="VAR_029559" description="In dbSNP:rs4845898.">
    <original>E</original>
    <variation>V</variation>
    <location>
        <position position="1505"/>
    </location>
</feature>
<feature type="sequence variant" id="VAR_062169" description="In dbSNP:rs41279454.">
    <original>I</original>
    <variation>T</variation>
    <location>
        <position position="1624"/>
    </location>
</feature>
<feature type="sequence variant" id="VAR_029560" description="In dbSNP:rs958068.">
    <original>S</original>
    <variation>F</variation>
    <location>
        <position position="1707"/>
    </location>
</feature>
<feature type="sequence variant" id="VAR_081500" description="In SCAR4; decreased protein abundance; altered mitochondrial morphology in patient cells." evidence="8">
    <location>
        <begin position="1803"/>
        <end position="4388"/>
    </location>
</feature>
<feature type="sequence variant" id="VAR_089207" description="Found in a patient with a neurodevelopmental disorder; uncertain significance; dbSNP:rs376670648." evidence="9">
    <original>I</original>
    <variation>T</variation>
    <location>
        <position position="1908"/>
    </location>
</feature>
<feature type="sequence variant" id="VAR_081501" description="In SCAR4." evidence="8">
    <location>
        <begin position="2277"/>
        <end position="4388"/>
    </location>
</feature>
<feature type="sequence variant" id="VAR_081502" description="In SCAR4." evidence="8">
    <location>
        <begin position="2572"/>
        <end position="4388"/>
    </location>
</feature>
<feature type="sequence variant" id="VAR_080913" description="In SCAR4." evidence="7">
    <original>L</original>
    <variation>S</variation>
    <location>
        <position position="2900"/>
    </location>
</feature>
<feature type="sequence variant" id="VAR_080914" description="In SCAR4; dbSNP:rs1191625571." evidence="7">
    <original>R</original>
    <variation>Q</variation>
    <location>
        <position position="3253"/>
    </location>
</feature>
<feature type="sequence variant" id="VAR_080915" description="In SCAR4; dbSNP:rs1557737087." evidence="7">
    <original>N</original>
    <variation>S</variation>
    <location>
        <position position="3521"/>
    </location>
</feature>
<feature type="sequence variant" id="VAR_081503" description="In SCAR4; uncertain significance." evidence="8">
    <original>N</original>
    <variation>I</variation>
    <location>
        <position position="4107"/>
    </location>
</feature>
<feature type="sequence variant" id="VAR_081504" description="In SCAR4; uncertain significance; dbSNP:rs1645323227." evidence="8">
    <original>G</original>
    <variation>S</variation>
    <location>
        <position position="4149"/>
    </location>
</feature>
<feature type="sequence variant" id="VAR_081505" description="In SCAR4; altered mitochondrial morphology in patient cells; dbSNP:rs746736545." evidence="8">
    <original>A</original>
    <variation>V</variation>
    <location>
        <position position="4210"/>
    </location>
</feature>
<feature type="sequence variant" id="VAR_080916" description="In SCAR4; dbSNP:rs1557478316." evidence="7">
    <original>R</original>
    <variation>Q</variation>
    <location>
        <position position="4228"/>
    </location>
</feature>
<feature type="sequence conflict" description="In Ref. 6; CAE46021." evidence="13" ref="6">
    <original>I</original>
    <variation>V</variation>
    <location>
        <position position="2332"/>
    </location>
</feature>
<feature type="sequence conflict" description="In Ref. 6; CAE46021." evidence="13" ref="6">
    <original>C</original>
    <variation>R</variation>
    <location>
        <position position="2361"/>
    </location>
</feature>
<feature type="sequence conflict" description="In Ref. 1; CAE75586/CAE75587." evidence="13" ref="1">
    <original>S</original>
    <variation>G</variation>
    <location>
        <position position="2783"/>
    </location>
</feature>
<feature type="sequence conflict" description="In Ref. 6; BAA32298." evidence="13" ref="6">
    <location>
        <position position="2876"/>
    </location>
</feature>
<feature type="sequence conflict" description="In Ref. 7; AAH28115." evidence="13" ref="7">
    <original>I</original>
    <variation>T</variation>
    <location>
        <position position="3203"/>
    </location>
</feature>
<feature type="sequence conflict" description="In Ref. 6; CAE46021." evidence="13" ref="6">
    <original>N</original>
    <variation>S</variation>
    <location>
        <position position="3332"/>
    </location>
</feature>
<feature type="sequence conflict" description="In Ref. 6; CAE46021." evidence="13" ref="6">
    <original>N</original>
    <variation>S</variation>
    <location>
        <position position="3379"/>
    </location>
</feature>
<feature type="sequence conflict" description="In Ref. 6; CAE46021." evidence="13" ref="6">
    <original>A</original>
    <variation>T</variation>
    <location>
        <position position="3400"/>
    </location>
</feature>
<feature type="sequence conflict" description="In Ref. 6; CAE46021." evidence="13" ref="6">
    <original>G</original>
    <variation>E</variation>
    <location>
        <position position="3678"/>
    </location>
</feature>
<feature type="sequence conflict" description="In Ref. 6; CAE46021." evidence="13" ref="6">
    <original>Q</original>
    <variation>R</variation>
    <location>
        <position position="3994"/>
    </location>
</feature>
<feature type="sequence conflict" description="In Ref. 6; CAE46021." evidence="13" ref="6">
    <original>A</original>
    <variation>T</variation>
    <location>
        <position position="4268"/>
    </location>
</feature>